<protein>
    <recommendedName>
        <fullName evidence="1">Protein GrpE</fullName>
    </recommendedName>
    <alternativeName>
        <fullName evidence="1">HSP-70 cofactor</fullName>
    </alternativeName>
</protein>
<organism>
    <name type="scientific">Wolbachia sp. subsp. Brugia malayi (strain TRS)</name>
    <dbReference type="NCBI Taxonomy" id="292805"/>
    <lineage>
        <taxon>Bacteria</taxon>
        <taxon>Pseudomonadati</taxon>
        <taxon>Pseudomonadota</taxon>
        <taxon>Alphaproteobacteria</taxon>
        <taxon>Rickettsiales</taxon>
        <taxon>Anaplasmataceae</taxon>
        <taxon>Wolbachieae</taxon>
        <taxon>Wolbachia</taxon>
    </lineage>
</organism>
<keyword id="KW-0143">Chaperone</keyword>
<keyword id="KW-0963">Cytoplasm</keyword>
<keyword id="KW-1185">Reference proteome</keyword>
<keyword id="KW-0346">Stress response</keyword>
<reference key="1">
    <citation type="journal article" date="2005" name="PLoS Biol.">
        <title>The Wolbachia genome of Brugia malayi: endosymbiont evolution within a human pathogenic nematode.</title>
        <authorList>
            <person name="Foster J."/>
            <person name="Ganatra M."/>
            <person name="Kamal I."/>
            <person name="Ware J."/>
            <person name="Makarova K."/>
            <person name="Ivanova N."/>
            <person name="Bhattacharyya A."/>
            <person name="Kapatral V."/>
            <person name="Kumar S."/>
            <person name="Posfai J."/>
            <person name="Vincze T."/>
            <person name="Ingram J."/>
            <person name="Moran L."/>
            <person name="Lapidus A."/>
            <person name="Omelchenko M."/>
            <person name="Kyrpides N."/>
            <person name="Ghedin E."/>
            <person name="Wang S."/>
            <person name="Goltsman E."/>
            <person name="Joukov V."/>
            <person name="Ostrovskaya O."/>
            <person name="Tsukerman K."/>
            <person name="Mazur M."/>
            <person name="Comb D."/>
            <person name="Koonin E."/>
            <person name="Slatko B."/>
        </authorList>
    </citation>
    <scope>NUCLEOTIDE SEQUENCE [LARGE SCALE GENOMIC DNA]</scope>
    <source>
        <strain>TRS</strain>
    </source>
</reference>
<proteinExistence type="inferred from homology"/>
<sequence length="182" mass="20973">MSDSSKERKKKFTGMVNKQKSEDQQNNSKQADDLDELKTLKERAVQLEDHLRRAVADNENVKRIMQKQISDANDYAVTKFARDMIDSCDNLKRVMEILKDDDPVHEGIKVAYKKIMNDLKKHGIEEIDPIGELFDSNLHQAVVEREDNEKKTGTIVEVLQTGYTIKNRLLRPAMVIISKKNC</sequence>
<gene>
    <name evidence="1" type="primary">grpE</name>
    <name type="ordered locus">Wbm0533</name>
</gene>
<comment type="function">
    <text evidence="1">Participates actively in the response to hyperosmotic and heat shock by preventing the aggregation of stress-denatured proteins, in association with DnaK and GrpE. It is the nucleotide exchange factor for DnaK and may function as a thermosensor. Unfolded proteins bind initially to DnaJ; upon interaction with the DnaJ-bound protein, DnaK hydrolyzes its bound ATP, resulting in the formation of a stable complex. GrpE releases ADP from DnaK; ATP binding to DnaK triggers the release of the substrate protein, thus completing the reaction cycle. Several rounds of ATP-dependent interactions between DnaJ, DnaK and GrpE are required for fully efficient folding.</text>
</comment>
<comment type="subunit">
    <text evidence="1">Homodimer.</text>
</comment>
<comment type="subcellular location">
    <subcellularLocation>
        <location evidence="1">Cytoplasm</location>
    </subcellularLocation>
</comment>
<comment type="similarity">
    <text evidence="1">Belongs to the GrpE family.</text>
</comment>
<evidence type="ECO:0000255" key="1">
    <source>
        <dbReference type="HAMAP-Rule" id="MF_01151"/>
    </source>
</evidence>
<evidence type="ECO:0000256" key="2">
    <source>
        <dbReference type="SAM" id="MobiDB-lite"/>
    </source>
</evidence>
<dbReference type="EMBL" id="AE017321">
    <property type="protein sequence ID" value="AAW71121.1"/>
    <property type="molecule type" value="Genomic_DNA"/>
</dbReference>
<dbReference type="RefSeq" id="WP_011256731.1">
    <property type="nucleotide sequence ID" value="NC_006833.1"/>
</dbReference>
<dbReference type="SMR" id="Q5GSA3"/>
<dbReference type="STRING" id="292805.Wbm0533"/>
<dbReference type="KEGG" id="wbm:Wbm0533"/>
<dbReference type="eggNOG" id="COG0576">
    <property type="taxonomic scope" value="Bacteria"/>
</dbReference>
<dbReference type="HOGENOM" id="CLU_057217_6_2_5"/>
<dbReference type="Proteomes" id="UP000000534">
    <property type="component" value="Chromosome"/>
</dbReference>
<dbReference type="GO" id="GO:0005737">
    <property type="term" value="C:cytoplasm"/>
    <property type="evidence" value="ECO:0007669"/>
    <property type="project" value="UniProtKB-SubCell"/>
</dbReference>
<dbReference type="GO" id="GO:0000774">
    <property type="term" value="F:adenyl-nucleotide exchange factor activity"/>
    <property type="evidence" value="ECO:0007669"/>
    <property type="project" value="InterPro"/>
</dbReference>
<dbReference type="GO" id="GO:0042803">
    <property type="term" value="F:protein homodimerization activity"/>
    <property type="evidence" value="ECO:0007669"/>
    <property type="project" value="InterPro"/>
</dbReference>
<dbReference type="GO" id="GO:0051087">
    <property type="term" value="F:protein-folding chaperone binding"/>
    <property type="evidence" value="ECO:0007669"/>
    <property type="project" value="InterPro"/>
</dbReference>
<dbReference type="GO" id="GO:0051082">
    <property type="term" value="F:unfolded protein binding"/>
    <property type="evidence" value="ECO:0007669"/>
    <property type="project" value="TreeGrafter"/>
</dbReference>
<dbReference type="GO" id="GO:0006457">
    <property type="term" value="P:protein folding"/>
    <property type="evidence" value="ECO:0007669"/>
    <property type="project" value="InterPro"/>
</dbReference>
<dbReference type="CDD" id="cd00446">
    <property type="entry name" value="GrpE"/>
    <property type="match status" value="1"/>
</dbReference>
<dbReference type="FunFam" id="2.30.22.10:FF:000001">
    <property type="entry name" value="Protein GrpE"/>
    <property type="match status" value="1"/>
</dbReference>
<dbReference type="Gene3D" id="3.90.20.20">
    <property type="match status" value="1"/>
</dbReference>
<dbReference type="Gene3D" id="2.30.22.10">
    <property type="entry name" value="Head domain of nucleotide exchange factor GrpE"/>
    <property type="match status" value="1"/>
</dbReference>
<dbReference type="HAMAP" id="MF_01151">
    <property type="entry name" value="GrpE"/>
    <property type="match status" value="1"/>
</dbReference>
<dbReference type="InterPro" id="IPR000740">
    <property type="entry name" value="GrpE"/>
</dbReference>
<dbReference type="InterPro" id="IPR013805">
    <property type="entry name" value="GrpE_coiled_coil"/>
</dbReference>
<dbReference type="InterPro" id="IPR009012">
    <property type="entry name" value="GrpE_head"/>
</dbReference>
<dbReference type="PANTHER" id="PTHR21237">
    <property type="entry name" value="GRPE PROTEIN"/>
    <property type="match status" value="1"/>
</dbReference>
<dbReference type="PANTHER" id="PTHR21237:SF23">
    <property type="entry name" value="GRPE PROTEIN HOMOLOG, MITOCHONDRIAL"/>
    <property type="match status" value="1"/>
</dbReference>
<dbReference type="Pfam" id="PF01025">
    <property type="entry name" value="GrpE"/>
    <property type="match status" value="1"/>
</dbReference>
<dbReference type="PRINTS" id="PR00773">
    <property type="entry name" value="GRPEPROTEIN"/>
</dbReference>
<dbReference type="SUPFAM" id="SSF58014">
    <property type="entry name" value="Coiled-coil domain of nucleotide exchange factor GrpE"/>
    <property type="match status" value="1"/>
</dbReference>
<dbReference type="SUPFAM" id="SSF51064">
    <property type="entry name" value="Head domain of nucleotide exchange factor GrpE"/>
    <property type="match status" value="1"/>
</dbReference>
<dbReference type="PROSITE" id="PS01071">
    <property type="entry name" value="GRPE"/>
    <property type="match status" value="1"/>
</dbReference>
<name>GRPE_WOLTR</name>
<accession>Q5GSA3</accession>
<feature type="chain" id="PRO_1000053660" description="Protein GrpE">
    <location>
        <begin position="1"/>
        <end position="182"/>
    </location>
</feature>
<feature type="region of interest" description="Disordered" evidence="2">
    <location>
        <begin position="1"/>
        <end position="37"/>
    </location>
</feature>